<dbReference type="EMBL" id="CP000302">
    <property type="protein sequence ID" value="ABE53618.1"/>
    <property type="molecule type" value="Genomic_DNA"/>
</dbReference>
<dbReference type="RefSeq" id="WP_011494785.1">
    <property type="nucleotide sequence ID" value="NC_007954.1"/>
</dbReference>
<dbReference type="SMR" id="Q12SF8"/>
<dbReference type="STRING" id="318161.Sden_0323"/>
<dbReference type="KEGG" id="sdn:Sden_0323"/>
<dbReference type="eggNOG" id="COG1309">
    <property type="taxonomic scope" value="Bacteria"/>
</dbReference>
<dbReference type="HOGENOM" id="CLU_069356_5_0_6"/>
<dbReference type="OrthoDB" id="9179041at2"/>
<dbReference type="Proteomes" id="UP000001982">
    <property type="component" value="Chromosome"/>
</dbReference>
<dbReference type="GO" id="GO:0043590">
    <property type="term" value="C:bacterial nucleoid"/>
    <property type="evidence" value="ECO:0007669"/>
    <property type="project" value="UniProtKB-UniRule"/>
</dbReference>
<dbReference type="GO" id="GO:0005737">
    <property type="term" value="C:cytoplasm"/>
    <property type="evidence" value="ECO:0007669"/>
    <property type="project" value="UniProtKB-UniRule"/>
</dbReference>
<dbReference type="GO" id="GO:0043565">
    <property type="term" value="F:sequence-specific DNA binding"/>
    <property type="evidence" value="ECO:0007669"/>
    <property type="project" value="UniProtKB-UniRule"/>
</dbReference>
<dbReference type="GO" id="GO:0051301">
    <property type="term" value="P:cell division"/>
    <property type="evidence" value="ECO:0007669"/>
    <property type="project" value="UniProtKB-KW"/>
</dbReference>
<dbReference type="GO" id="GO:0010974">
    <property type="term" value="P:negative regulation of division septum assembly"/>
    <property type="evidence" value="ECO:0007669"/>
    <property type="project" value="InterPro"/>
</dbReference>
<dbReference type="Gene3D" id="1.10.357.10">
    <property type="entry name" value="Tetracycline Repressor, domain 2"/>
    <property type="match status" value="1"/>
</dbReference>
<dbReference type="HAMAP" id="MF_01839">
    <property type="entry name" value="NO_factor_SlmA"/>
    <property type="match status" value="1"/>
</dbReference>
<dbReference type="InterPro" id="IPR009057">
    <property type="entry name" value="Homeodomain-like_sf"/>
</dbReference>
<dbReference type="InterPro" id="IPR050624">
    <property type="entry name" value="HTH-type_Tx_Regulator"/>
</dbReference>
<dbReference type="InterPro" id="IPR001647">
    <property type="entry name" value="HTH_TetR"/>
</dbReference>
<dbReference type="InterPro" id="IPR023769">
    <property type="entry name" value="NO_SlmA"/>
</dbReference>
<dbReference type="InterPro" id="IPR054580">
    <property type="entry name" value="SlmA-like_C"/>
</dbReference>
<dbReference type="NCBIfam" id="NF007015">
    <property type="entry name" value="PRK09480.1"/>
    <property type="match status" value="1"/>
</dbReference>
<dbReference type="PANTHER" id="PTHR43479">
    <property type="entry name" value="ACREF/ENVCD OPERON REPRESSOR-RELATED"/>
    <property type="match status" value="1"/>
</dbReference>
<dbReference type="PANTHER" id="PTHR43479:SF11">
    <property type="entry name" value="ACREF_ENVCD OPERON REPRESSOR-RELATED"/>
    <property type="match status" value="1"/>
</dbReference>
<dbReference type="Pfam" id="PF22276">
    <property type="entry name" value="SlmA-like_C"/>
    <property type="match status" value="1"/>
</dbReference>
<dbReference type="Pfam" id="PF00440">
    <property type="entry name" value="TetR_N"/>
    <property type="match status" value="1"/>
</dbReference>
<dbReference type="SUPFAM" id="SSF46689">
    <property type="entry name" value="Homeodomain-like"/>
    <property type="match status" value="1"/>
</dbReference>
<dbReference type="PROSITE" id="PS50977">
    <property type="entry name" value="HTH_TETR_2"/>
    <property type="match status" value="1"/>
</dbReference>
<comment type="function">
    <text evidence="1">Required for nucleoid occlusion (NO) phenomenon, which prevents Z-ring formation and cell division over the nucleoid. Acts as a DNA-associated cell division inhibitor that binds simultaneously chromosomal DNA and FtsZ, and disrupts the assembly of FtsZ polymers. SlmA-DNA-binding sequences (SBS) are dispersed on non-Ter regions of the chromosome, preventing FtsZ polymerization at these regions.</text>
</comment>
<comment type="subunit">
    <text evidence="1">Homodimer. Interacts with FtsZ.</text>
</comment>
<comment type="subcellular location">
    <subcellularLocation>
        <location evidence="1">Cytoplasm</location>
        <location evidence="1">Nucleoid</location>
    </subcellularLocation>
</comment>
<comment type="similarity">
    <text evidence="1">Belongs to the nucleoid occlusion factor SlmA family.</text>
</comment>
<reference key="1">
    <citation type="submission" date="2006-03" db="EMBL/GenBank/DDBJ databases">
        <title>Complete sequence of Shewanella denitrificans OS217.</title>
        <authorList>
            <consortium name="US DOE Joint Genome Institute"/>
            <person name="Copeland A."/>
            <person name="Lucas S."/>
            <person name="Lapidus A."/>
            <person name="Barry K."/>
            <person name="Detter J.C."/>
            <person name="Glavina del Rio T."/>
            <person name="Hammon N."/>
            <person name="Israni S."/>
            <person name="Dalin E."/>
            <person name="Tice H."/>
            <person name="Pitluck S."/>
            <person name="Brettin T."/>
            <person name="Bruce D."/>
            <person name="Han C."/>
            <person name="Tapia R."/>
            <person name="Gilna P."/>
            <person name="Kiss H."/>
            <person name="Schmutz J."/>
            <person name="Larimer F."/>
            <person name="Land M."/>
            <person name="Hauser L."/>
            <person name="Kyrpides N."/>
            <person name="Lykidis A."/>
            <person name="Richardson P."/>
        </authorList>
    </citation>
    <scope>NUCLEOTIDE SEQUENCE [LARGE SCALE GENOMIC DNA]</scope>
    <source>
        <strain>OS217 / ATCC BAA-1090 / DSM 15013</strain>
    </source>
</reference>
<evidence type="ECO:0000255" key="1">
    <source>
        <dbReference type="HAMAP-Rule" id="MF_01839"/>
    </source>
</evidence>
<sequence>MATSPKINRREHILQCLAQMLETSPGQRITTAKLAAEVGVSEAALYRHFPSKARMFEGLIEFIEDAILSRLNLIMDEEKDTMMRCQLVLQLLLVFSERNPGISRVLNGDALLGENERLRSRISVLFAKIETQLKQILREKTLREGQGFNLDEAILANLLLAVAEGRIAQFVRSEFKQKPTLHFDEQWTFIQQQLLRS</sequence>
<accession>Q12SF8</accession>
<organism>
    <name type="scientific">Shewanella denitrificans (strain OS217 / ATCC BAA-1090 / DSM 15013)</name>
    <dbReference type="NCBI Taxonomy" id="318161"/>
    <lineage>
        <taxon>Bacteria</taxon>
        <taxon>Pseudomonadati</taxon>
        <taxon>Pseudomonadota</taxon>
        <taxon>Gammaproteobacteria</taxon>
        <taxon>Alteromonadales</taxon>
        <taxon>Shewanellaceae</taxon>
        <taxon>Shewanella</taxon>
    </lineage>
</organism>
<name>SLMA_SHEDO</name>
<feature type="chain" id="PRO_1000070527" description="Nucleoid occlusion factor SlmA">
    <location>
        <begin position="1"/>
        <end position="197"/>
    </location>
</feature>
<feature type="domain" description="HTH tetR-type" evidence="1">
    <location>
        <begin position="7"/>
        <end position="67"/>
    </location>
</feature>
<feature type="DNA-binding region" description="H-T-H motif" evidence="1">
    <location>
        <begin position="30"/>
        <end position="49"/>
    </location>
</feature>
<gene>
    <name evidence="1" type="primary">slmA</name>
    <name type="ordered locus">Sden_0323</name>
</gene>
<proteinExistence type="inferred from homology"/>
<protein>
    <recommendedName>
        <fullName evidence="1">Nucleoid occlusion factor SlmA</fullName>
    </recommendedName>
</protein>
<keyword id="KW-0131">Cell cycle</keyword>
<keyword id="KW-0132">Cell division</keyword>
<keyword id="KW-0963">Cytoplasm</keyword>
<keyword id="KW-0238">DNA-binding</keyword>
<keyword id="KW-1185">Reference proteome</keyword>